<gene>
    <name evidence="1" type="primary">rsmF</name>
    <name type="ordered locus">Shewmr4_1665</name>
</gene>
<accession>Q0HJM6</accession>
<reference key="1">
    <citation type="submission" date="2006-08" db="EMBL/GenBank/DDBJ databases">
        <title>Complete sequence of Shewanella sp. MR-4.</title>
        <authorList>
            <consortium name="US DOE Joint Genome Institute"/>
            <person name="Copeland A."/>
            <person name="Lucas S."/>
            <person name="Lapidus A."/>
            <person name="Barry K."/>
            <person name="Detter J.C."/>
            <person name="Glavina del Rio T."/>
            <person name="Hammon N."/>
            <person name="Israni S."/>
            <person name="Dalin E."/>
            <person name="Tice H."/>
            <person name="Pitluck S."/>
            <person name="Kiss H."/>
            <person name="Brettin T."/>
            <person name="Bruce D."/>
            <person name="Han C."/>
            <person name="Tapia R."/>
            <person name="Gilna P."/>
            <person name="Schmutz J."/>
            <person name="Larimer F."/>
            <person name="Land M."/>
            <person name="Hauser L."/>
            <person name="Kyrpides N."/>
            <person name="Mikhailova N."/>
            <person name="Nealson K."/>
            <person name="Konstantinidis K."/>
            <person name="Klappenbach J."/>
            <person name="Tiedje J."/>
            <person name="Richardson P."/>
        </authorList>
    </citation>
    <scope>NUCLEOTIDE SEQUENCE [LARGE SCALE GENOMIC DNA]</scope>
    <source>
        <strain>MR-4</strain>
    </source>
</reference>
<name>RSMF_SHESM</name>
<protein>
    <recommendedName>
        <fullName evidence="1">Ribosomal RNA small subunit methyltransferase F</fullName>
        <ecNumber evidence="1">2.1.1.178</ecNumber>
    </recommendedName>
    <alternativeName>
        <fullName evidence="1">16S rRNA m5C1407 methyltransferase</fullName>
    </alternativeName>
    <alternativeName>
        <fullName evidence="1">rRNA (cytosine-C(5)-)-methyltransferase RsmF</fullName>
    </alternativeName>
</protein>
<feature type="chain" id="PRO_0000285014" description="Ribosomal RNA small subunit methyltransferase F">
    <location>
        <begin position="1"/>
        <end position="481"/>
    </location>
</feature>
<feature type="active site" description="Nucleophile" evidence="1">
    <location>
        <position position="241"/>
    </location>
</feature>
<feature type="binding site" evidence="1">
    <location>
        <begin position="119"/>
        <end position="125"/>
    </location>
    <ligand>
        <name>S-adenosyl-L-methionine</name>
        <dbReference type="ChEBI" id="CHEBI:59789"/>
    </ligand>
</feature>
<feature type="binding site" evidence="1">
    <location>
        <position position="143"/>
    </location>
    <ligand>
        <name>S-adenosyl-L-methionine</name>
        <dbReference type="ChEBI" id="CHEBI:59789"/>
    </ligand>
</feature>
<feature type="binding site" evidence="1">
    <location>
        <position position="170"/>
    </location>
    <ligand>
        <name>S-adenosyl-L-methionine</name>
        <dbReference type="ChEBI" id="CHEBI:59789"/>
    </ligand>
</feature>
<feature type="binding site" evidence="1">
    <location>
        <position position="188"/>
    </location>
    <ligand>
        <name>S-adenosyl-L-methionine</name>
        <dbReference type="ChEBI" id="CHEBI:59789"/>
    </ligand>
</feature>
<proteinExistence type="inferred from homology"/>
<keyword id="KW-0963">Cytoplasm</keyword>
<keyword id="KW-0489">Methyltransferase</keyword>
<keyword id="KW-0694">RNA-binding</keyword>
<keyword id="KW-0698">rRNA processing</keyword>
<keyword id="KW-0949">S-adenosyl-L-methionine</keyword>
<keyword id="KW-0808">Transferase</keyword>
<sequence>MVQLNQNFINTIAQELPAHLSMDDFIAACSRPLRRSIRVNTLKISSEDFKQLMQPKGWTFDPIPWCEDGFWISYDEEEQLGNALEHIQGLFYIQEASSMLPPTALFTPNADWQCVLDLASAPGSKTTQMAALMNNQGLLVANEYSASRVKVLHANVLRMGASHCALTHFDGRVFGEYLYESFDAVLIDAPCGGEGIVRKDADALKSWSLDEVLEISETQKALIESAFLALKPGGSLVYSTCTLNRHENQGVCEYLQQTYGDAVQFESLNQLFDGAEKATTPEGFLHVWPQIYDSEGFFVAKLTKTRSVPRLQPEPKLQKNFPFTEASAKQAKAIQAYFADDLGIELPDDLIMVRDDEFWLFPHEFRDFIGKMRFQRIGVKLADHSKHGFKVRHEAIIALAGKALTAATNGAKVVDVSDEQAKEYLMGRDIPLDTAGKAQGEVIVCYGGAPLGMAKHLGNKLKNSLPRDLVKDKVLLLPPQA</sequence>
<dbReference type="EC" id="2.1.1.178" evidence="1"/>
<dbReference type="EMBL" id="CP000446">
    <property type="protein sequence ID" value="ABI38741.1"/>
    <property type="status" value="ALT_INIT"/>
    <property type="molecule type" value="Genomic_DNA"/>
</dbReference>
<dbReference type="RefSeq" id="WP_041409023.1">
    <property type="nucleotide sequence ID" value="NC_008321.1"/>
</dbReference>
<dbReference type="SMR" id="Q0HJM6"/>
<dbReference type="KEGG" id="she:Shewmr4_1665"/>
<dbReference type="HOGENOM" id="CLU_005316_6_2_6"/>
<dbReference type="GO" id="GO:0005737">
    <property type="term" value="C:cytoplasm"/>
    <property type="evidence" value="ECO:0007669"/>
    <property type="project" value="UniProtKB-SubCell"/>
</dbReference>
<dbReference type="GO" id="GO:0003723">
    <property type="term" value="F:RNA binding"/>
    <property type="evidence" value="ECO:0007669"/>
    <property type="project" value="UniProtKB-KW"/>
</dbReference>
<dbReference type="GO" id="GO:0009383">
    <property type="term" value="F:rRNA (cytosine-C5-)-methyltransferase activity"/>
    <property type="evidence" value="ECO:0007669"/>
    <property type="project" value="TreeGrafter"/>
</dbReference>
<dbReference type="GO" id="GO:0070475">
    <property type="term" value="P:rRNA base methylation"/>
    <property type="evidence" value="ECO:0007669"/>
    <property type="project" value="TreeGrafter"/>
</dbReference>
<dbReference type="CDD" id="cd02440">
    <property type="entry name" value="AdoMet_MTases"/>
    <property type="match status" value="1"/>
</dbReference>
<dbReference type="FunFam" id="3.40.50.150:FF:000079">
    <property type="entry name" value="Ribosomal RNA small subunit methyltransferase F"/>
    <property type="match status" value="1"/>
</dbReference>
<dbReference type="Gene3D" id="3.10.450.720">
    <property type="match status" value="1"/>
</dbReference>
<dbReference type="Gene3D" id="3.40.50.150">
    <property type="entry name" value="Vaccinia Virus protein VP39"/>
    <property type="match status" value="1"/>
</dbReference>
<dbReference type="HAMAP" id="MF_01579">
    <property type="entry name" value="16SrRNA_methyltr_F"/>
    <property type="match status" value="1"/>
</dbReference>
<dbReference type="InterPro" id="IPR031341">
    <property type="entry name" value="Methyltr_RsmF_N"/>
</dbReference>
<dbReference type="InterPro" id="IPR049560">
    <property type="entry name" value="MeTrfase_RsmB-F_NOP2_cat"/>
</dbReference>
<dbReference type="InterPro" id="IPR001678">
    <property type="entry name" value="MeTrfase_RsmB-F_NOP2_dom"/>
</dbReference>
<dbReference type="InterPro" id="IPR027391">
    <property type="entry name" value="Nol1_Nop2_Fmu_2"/>
</dbReference>
<dbReference type="InterPro" id="IPR011023">
    <property type="entry name" value="Nop2p"/>
</dbReference>
<dbReference type="InterPro" id="IPR023267">
    <property type="entry name" value="RCMT"/>
</dbReference>
<dbReference type="InterPro" id="IPR023545">
    <property type="entry name" value="rRNA_ssu_MeTfrase_F"/>
</dbReference>
<dbReference type="InterPro" id="IPR029063">
    <property type="entry name" value="SAM-dependent_MTases_sf"/>
</dbReference>
<dbReference type="InterPro" id="IPR048457">
    <property type="entry name" value="YebU_pre-PUA_dom"/>
</dbReference>
<dbReference type="NCBIfam" id="TIGR00446">
    <property type="entry name" value="nop2p"/>
    <property type="match status" value="1"/>
</dbReference>
<dbReference type="NCBIfam" id="NF008898">
    <property type="entry name" value="PRK11933.1"/>
    <property type="match status" value="1"/>
</dbReference>
<dbReference type="PANTHER" id="PTHR22807:SF30">
    <property type="entry name" value="28S RRNA (CYTOSINE(4447)-C(5))-METHYLTRANSFERASE-RELATED"/>
    <property type="match status" value="1"/>
</dbReference>
<dbReference type="PANTHER" id="PTHR22807">
    <property type="entry name" value="NOP2 YEAST -RELATED NOL1/NOP2/FMU SUN DOMAIN-CONTAINING"/>
    <property type="match status" value="1"/>
</dbReference>
<dbReference type="Pfam" id="PF01189">
    <property type="entry name" value="Methyltr_RsmB-F"/>
    <property type="match status" value="1"/>
</dbReference>
<dbReference type="Pfam" id="PF17125">
    <property type="entry name" value="Methyltr_RsmF_N"/>
    <property type="match status" value="1"/>
</dbReference>
<dbReference type="Pfam" id="PF13636">
    <property type="entry name" value="Methyltranf_PUA"/>
    <property type="match status" value="1"/>
</dbReference>
<dbReference type="Pfam" id="PF21150">
    <property type="entry name" value="YebU_pre-PUA_dom"/>
    <property type="match status" value="1"/>
</dbReference>
<dbReference type="PRINTS" id="PR02008">
    <property type="entry name" value="RCMTFAMILY"/>
</dbReference>
<dbReference type="SUPFAM" id="SSF53335">
    <property type="entry name" value="S-adenosyl-L-methionine-dependent methyltransferases"/>
    <property type="match status" value="1"/>
</dbReference>
<dbReference type="PROSITE" id="PS51686">
    <property type="entry name" value="SAM_MT_RSMB_NOP"/>
    <property type="match status" value="1"/>
</dbReference>
<organism>
    <name type="scientific">Shewanella sp. (strain MR-4)</name>
    <dbReference type="NCBI Taxonomy" id="60480"/>
    <lineage>
        <taxon>Bacteria</taxon>
        <taxon>Pseudomonadati</taxon>
        <taxon>Pseudomonadota</taxon>
        <taxon>Gammaproteobacteria</taxon>
        <taxon>Alteromonadales</taxon>
        <taxon>Shewanellaceae</taxon>
        <taxon>Shewanella</taxon>
    </lineage>
</organism>
<comment type="function">
    <text evidence="1">Specifically methylates the cytosine at position 1407 (m5C1407) of 16S rRNA.</text>
</comment>
<comment type="catalytic activity">
    <reaction evidence="1">
        <text>cytidine(1407) in 16S rRNA + S-adenosyl-L-methionine = 5-methylcytidine(1407) in 16S rRNA + S-adenosyl-L-homocysteine + H(+)</text>
        <dbReference type="Rhea" id="RHEA:42756"/>
        <dbReference type="Rhea" id="RHEA-COMP:10223"/>
        <dbReference type="Rhea" id="RHEA-COMP:10224"/>
        <dbReference type="ChEBI" id="CHEBI:15378"/>
        <dbReference type="ChEBI" id="CHEBI:57856"/>
        <dbReference type="ChEBI" id="CHEBI:59789"/>
        <dbReference type="ChEBI" id="CHEBI:74483"/>
        <dbReference type="ChEBI" id="CHEBI:82748"/>
        <dbReference type="EC" id="2.1.1.178"/>
    </reaction>
</comment>
<comment type="subcellular location">
    <subcellularLocation>
        <location evidence="1">Cytoplasm</location>
    </subcellularLocation>
</comment>
<comment type="similarity">
    <text evidence="1">Belongs to the class I-like SAM-binding methyltransferase superfamily. RsmB/NOP family.</text>
</comment>
<comment type="sequence caution" evidence="2">
    <conflict type="erroneous initiation">
        <sequence resource="EMBL-CDS" id="ABI38741"/>
    </conflict>
</comment>
<evidence type="ECO:0000255" key="1">
    <source>
        <dbReference type="HAMAP-Rule" id="MF_01579"/>
    </source>
</evidence>
<evidence type="ECO:0000305" key="2"/>